<organism>
    <name type="scientific">Bos taurus</name>
    <name type="common">Bovine</name>
    <dbReference type="NCBI Taxonomy" id="9913"/>
    <lineage>
        <taxon>Eukaryota</taxon>
        <taxon>Metazoa</taxon>
        <taxon>Chordata</taxon>
        <taxon>Craniata</taxon>
        <taxon>Vertebrata</taxon>
        <taxon>Euteleostomi</taxon>
        <taxon>Mammalia</taxon>
        <taxon>Eutheria</taxon>
        <taxon>Laurasiatheria</taxon>
        <taxon>Artiodactyla</taxon>
        <taxon>Ruminantia</taxon>
        <taxon>Pecora</taxon>
        <taxon>Bovidae</taxon>
        <taxon>Bovinae</taxon>
        <taxon>Bos</taxon>
    </lineage>
</organism>
<feature type="chain" id="PRO_0000274376" description="Stabilizer of axonemal microtubules 4">
    <location>
        <begin position="1"/>
        <end position="428"/>
    </location>
</feature>
<feature type="region of interest" description="Disordered" evidence="3">
    <location>
        <begin position="201"/>
        <end position="231"/>
    </location>
</feature>
<evidence type="ECO:0000250" key="1">
    <source>
        <dbReference type="UniProtKB" id="Q66HR9"/>
    </source>
</evidence>
<evidence type="ECO:0000250" key="2">
    <source>
        <dbReference type="UniProtKB" id="Q7Z5V6"/>
    </source>
</evidence>
<evidence type="ECO:0000256" key="3">
    <source>
        <dbReference type="SAM" id="MobiDB-lite"/>
    </source>
</evidence>
<evidence type="ECO:0000269" key="4">
    <source>
    </source>
</evidence>
<evidence type="ECO:0007744" key="5">
    <source>
        <dbReference type="PDB" id="8OTZ"/>
    </source>
</evidence>
<name>SAXO4_BOVIN</name>
<protein>
    <recommendedName>
        <fullName evidence="2">Stabilizer of axonemal microtubules 4</fullName>
    </recommendedName>
    <alternativeName>
        <fullName>Protein phosphatase 1 regulatory subunit 32</fullName>
    </alternativeName>
</protein>
<proteinExistence type="evidence at protein level"/>
<dbReference type="EMBL" id="BC111283">
    <property type="protein sequence ID" value="AAI11284.1"/>
    <property type="molecule type" value="mRNA"/>
</dbReference>
<dbReference type="RefSeq" id="NP_001033133.1">
    <property type="nucleotide sequence ID" value="NM_001038044.2"/>
</dbReference>
<dbReference type="PDB" id="8OTZ">
    <property type="method" value="EM"/>
    <property type="resolution" value="3.60 A"/>
    <property type="chains" value="BS/BT=1-428"/>
</dbReference>
<dbReference type="PDBsum" id="8OTZ"/>
<dbReference type="EMDB" id="EMD-17187"/>
<dbReference type="EMDB" id="EMD-50664"/>
<dbReference type="SMR" id="Q2T9T0"/>
<dbReference type="FunCoup" id="Q2T9T0">
    <property type="interactions" value="72"/>
</dbReference>
<dbReference type="STRING" id="9913.ENSBTAP00000019750"/>
<dbReference type="PaxDb" id="9913-ENSBTAP00000019750"/>
<dbReference type="GeneID" id="506337"/>
<dbReference type="KEGG" id="bta:506337"/>
<dbReference type="CTD" id="506337"/>
<dbReference type="eggNOG" id="ENOG502QR8X">
    <property type="taxonomic scope" value="Eukaryota"/>
</dbReference>
<dbReference type="InParanoid" id="Q2T9T0"/>
<dbReference type="OrthoDB" id="9980630at2759"/>
<dbReference type="Proteomes" id="UP000009136">
    <property type="component" value="Unplaced"/>
</dbReference>
<dbReference type="GO" id="GO:0160111">
    <property type="term" value="C:axonemal A tubule inner sheath"/>
    <property type="evidence" value="ECO:0000250"/>
    <property type="project" value="UniProtKB"/>
</dbReference>
<dbReference type="GO" id="GO:0005929">
    <property type="term" value="C:cilium"/>
    <property type="evidence" value="ECO:0000250"/>
    <property type="project" value="UniProtKB"/>
</dbReference>
<dbReference type="GO" id="GO:0005737">
    <property type="term" value="C:cytoplasm"/>
    <property type="evidence" value="ECO:0000250"/>
    <property type="project" value="UniProtKB"/>
</dbReference>
<dbReference type="GO" id="GO:0036126">
    <property type="term" value="C:sperm flagellum"/>
    <property type="evidence" value="ECO:0000250"/>
    <property type="project" value="UniProtKB"/>
</dbReference>
<dbReference type="GO" id="GO:0019902">
    <property type="term" value="F:phosphatase binding"/>
    <property type="evidence" value="ECO:0000250"/>
    <property type="project" value="UniProtKB"/>
</dbReference>
<dbReference type="GO" id="GO:0030317">
    <property type="term" value="P:flagellated sperm motility"/>
    <property type="evidence" value="ECO:0000250"/>
    <property type="project" value="UniProtKB"/>
</dbReference>
<dbReference type="InterPro" id="IPR031410">
    <property type="entry name" value="SAXO4"/>
</dbReference>
<dbReference type="PANTHER" id="PTHR34349">
    <property type="entry name" value="PROTEIN PHOSPHATASE 1 REGULATORY SUBUNIT 32"/>
    <property type="match status" value="1"/>
</dbReference>
<dbReference type="PANTHER" id="PTHR34349:SF1">
    <property type="entry name" value="PROTEIN PHOSPHATASE 1 REGULATORY SUBUNIT 32"/>
    <property type="match status" value="1"/>
</dbReference>
<dbReference type="Pfam" id="PF15691">
    <property type="entry name" value="PPP1R32"/>
    <property type="match status" value="1"/>
</dbReference>
<gene>
    <name evidence="2" type="primary">SAXO4</name>
    <name type="synonym">PPP1R32</name>
</gene>
<accession>Q2T9T0</accession>
<reference key="1">
    <citation type="submission" date="2005-12" db="EMBL/GenBank/DDBJ databases">
        <authorList>
            <consortium name="NIH - Mammalian Gene Collection (MGC) project"/>
        </authorList>
    </citation>
    <scope>NUCLEOTIDE SEQUENCE [LARGE SCALE MRNA]</scope>
    <source>
        <strain>Crossbred X Angus</strain>
        <tissue>Liver</tissue>
    </source>
</reference>
<reference evidence="5" key="2">
    <citation type="journal article" date="2023" name="Cell">
        <title>Structural specializations of the sperm tail.</title>
        <authorList>
            <person name="Leung M.R."/>
            <person name="Zeng J."/>
            <person name="Wang X."/>
            <person name="Roelofs M.C."/>
            <person name="Huang W."/>
            <person name="Zenezini Chiozzi R."/>
            <person name="Hevler J.F."/>
            <person name="Heck A.J.R."/>
            <person name="Dutcher S.K."/>
            <person name="Brown A."/>
            <person name="Zhang R."/>
            <person name="Zeev-Ben-Mordehai T."/>
        </authorList>
    </citation>
    <scope>STRUCTURE BY ELECTRON MICROSCOPY (3.60 ANGSTROMS)</scope>
    <scope>SUBUNIT</scope>
    <scope>SUBCELLULAR LOCATION</scope>
</reference>
<comment type="subunit">
    <text evidence="2 4">Microtubule inner protein component of sperm flagellar doublet microtubules (PubMed:37327785). Interacts with PPP1CA (By similarity).</text>
</comment>
<comment type="subcellular location">
    <subcellularLocation>
        <location evidence="1">Cell projection</location>
        <location evidence="1">Cilium</location>
    </subcellularLocation>
    <subcellularLocation>
        <location evidence="1">Cytoplasm</location>
    </subcellularLocation>
    <subcellularLocation>
        <location evidence="4">Cytoplasm</location>
        <location evidence="4">Cytoskeleton</location>
        <location evidence="4">Flagellum axoneme</location>
    </subcellularLocation>
    <text evidence="1">Localized to the cilia of polarized ependymal cells during development and at the adult stage. Preferentially locates between the peripheral microtubules of the axoneme and the ciliary membrane.</text>
</comment>
<keyword id="KW-0002">3D-structure</keyword>
<keyword id="KW-0966">Cell projection</keyword>
<keyword id="KW-0969">Cilium</keyword>
<keyword id="KW-0963">Cytoplasm</keyword>
<keyword id="KW-0206">Cytoskeleton</keyword>
<keyword id="KW-0282">Flagellum</keyword>
<keyword id="KW-1185">Reference proteome</keyword>
<sequence length="428" mass="47759">MMGKLPLGVVSPYVKMSSGGCTDPLKFYATSYCTAYGREDFKPRVGSHRGTGYKSNYRPVVFYQPHLDALDNTATGEQGCNNFQTVTSQSYRPLEVPDGTHPLPWNLHQTNSGYSREKASAVTPIKEVRKVHFDTQDYGPQAITGLEPKDAPLLHQQQNKGSLEWENAGHGPRFMTSEYNSKYLKEPSHQPDLLQKNSVGAKEETGFTEESNKNPIVFQPPSQALPGDPVLLPGRSVTKSDFLPISHPHGDEFLPVLARGSERETGFSRVNERTLNPRVPPPCPEPSSMNHWQFQSPQRMQQTNVALLGRETVGNKEPSGFSLNNPSYVRSPYDPDMDNRYLTTYNQGYFENIPKGLDREGWTRGGLQPQKPGGYALNQPVTRLEATPTPTESLRRLHPHLGRTLISVDPFYRTAPPSGHVSRFTAPN</sequence>